<feature type="chain" id="PRO_0000229392" description="tRNA pseudouridine synthase B">
    <location>
        <begin position="1"/>
        <end position="273"/>
    </location>
</feature>
<feature type="active site" description="Nucleophile" evidence="1">
    <location>
        <position position="38"/>
    </location>
</feature>
<reference key="1">
    <citation type="journal article" date="2008" name="Appl. Environ. Microbiol.">
        <title>Genome of the epsilonproteobacterial chemolithoautotroph Sulfurimonas denitrificans.</title>
        <authorList>
            <person name="Sievert S.M."/>
            <person name="Scott K.M."/>
            <person name="Klotz M.G."/>
            <person name="Chain P.S.G."/>
            <person name="Hauser L.J."/>
            <person name="Hemp J."/>
            <person name="Huegler M."/>
            <person name="Land M."/>
            <person name="Lapidus A."/>
            <person name="Larimer F.W."/>
            <person name="Lucas S."/>
            <person name="Malfatti S.A."/>
            <person name="Meyer F."/>
            <person name="Paulsen I.T."/>
            <person name="Ren Q."/>
            <person name="Simon J."/>
            <person name="Bailey K."/>
            <person name="Diaz E."/>
            <person name="Fitzpatrick K.A."/>
            <person name="Glover B."/>
            <person name="Gwatney N."/>
            <person name="Korajkic A."/>
            <person name="Long A."/>
            <person name="Mobberley J.M."/>
            <person name="Pantry S.N."/>
            <person name="Pazder G."/>
            <person name="Peterson S."/>
            <person name="Quintanilla J.D."/>
            <person name="Sprinkle R."/>
            <person name="Stephens J."/>
            <person name="Thomas P."/>
            <person name="Vaughn R."/>
            <person name="Weber M.J."/>
            <person name="Wooten L.L."/>
        </authorList>
    </citation>
    <scope>NUCLEOTIDE SEQUENCE [LARGE SCALE GENOMIC DNA]</scope>
    <source>
        <strain>ATCC 33889 / DSM 1251</strain>
    </source>
</reference>
<dbReference type="EC" id="5.4.99.25" evidence="1"/>
<dbReference type="EMBL" id="CP000153">
    <property type="protein sequence ID" value="ABB43719.1"/>
    <property type="molecule type" value="Genomic_DNA"/>
</dbReference>
<dbReference type="RefSeq" id="WP_011372073.1">
    <property type="nucleotide sequence ID" value="NC_007575.1"/>
</dbReference>
<dbReference type="SMR" id="Q30TG2"/>
<dbReference type="STRING" id="326298.Suden_0438"/>
<dbReference type="KEGG" id="tdn:Suden_0438"/>
<dbReference type="eggNOG" id="COG0130">
    <property type="taxonomic scope" value="Bacteria"/>
</dbReference>
<dbReference type="HOGENOM" id="CLU_032087_2_0_7"/>
<dbReference type="OrthoDB" id="9802309at2"/>
<dbReference type="Proteomes" id="UP000002714">
    <property type="component" value="Chromosome"/>
</dbReference>
<dbReference type="GO" id="GO:0003723">
    <property type="term" value="F:RNA binding"/>
    <property type="evidence" value="ECO:0007669"/>
    <property type="project" value="InterPro"/>
</dbReference>
<dbReference type="GO" id="GO:0160148">
    <property type="term" value="F:tRNA pseudouridine(55) synthase activity"/>
    <property type="evidence" value="ECO:0007669"/>
    <property type="project" value="UniProtKB-EC"/>
</dbReference>
<dbReference type="GO" id="GO:1990481">
    <property type="term" value="P:mRNA pseudouridine synthesis"/>
    <property type="evidence" value="ECO:0007669"/>
    <property type="project" value="TreeGrafter"/>
</dbReference>
<dbReference type="GO" id="GO:0031119">
    <property type="term" value="P:tRNA pseudouridine synthesis"/>
    <property type="evidence" value="ECO:0007669"/>
    <property type="project" value="UniProtKB-UniRule"/>
</dbReference>
<dbReference type="Gene3D" id="3.30.2350.10">
    <property type="entry name" value="Pseudouridine synthase"/>
    <property type="match status" value="1"/>
</dbReference>
<dbReference type="HAMAP" id="MF_01080">
    <property type="entry name" value="TruB_bact"/>
    <property type="match status" value="1"/>
</dbReference>
<dbReference type="InterPro" id="IPR020103">
    <property type="entry name" value="PsdUridine_synth_cat_dom_sf"/>
</dbReference>
<dbReference type="InterPro" id="IPR002501">
    <property type="entry name" value="PsdUridine_synth_N"/>
</dbReference>
<dbReference type="InterPro" id="IPR014780">
    <property type="entry name" value="tRNA_psdUridine_synth_TruB"/>
</dbReference>
<dbReference type="NCBIfam" id="TIGR00431">
    <property type="entry name" value="TruB"/>
    <property type="match status" value="1"/>
</dbReference>
<dbReference type="PANTHER" id="PTHR13767:SF2">
    <property type="entry name" value="PSEUDOURIDYLATE SYNTHASE TRUB1"/>
    <property type="match status" value="1"/>
</dbReference>
<dbReference type="PANTHER" id="PTHR13767">
    <property type="entry name" value="TRNA-PSEUDOURIDINE SYNTHASE"/>
    <property type="match status" value="1"/>
</dbReference>
<dbReference type="Pfam" id="PF01509">
    <property type="entry name" value="TruB_N"/>
    <property type="match status" value="1"/>
</dbReference>
<dbReference type="SUPFAM" id="SSF55120">
    <property type="entry name" value="Pseudouridine synthase"/>
    <property type="match status" value="1"/>
</dbReference>
<sequence>MNRLFVAYKPAGIGSNLFLSRIKREYKTKKAGFSGTLDPFAKGVLIIGMGSYTKLFRFLAKAPKVYRATLWLGAKSDTLDTEMIEEVEILEEFDEADVLKAIKSLEGSLEYEPPIFSAKQINGQRAYDLARAGVEFSLNKINSTIYETKLVSYCHPFVTFEAIVSEGTYIRSLGLIIANRLGVKNGSLSALERLSEGRFKYDNHKPLDIKKSLNMMQNFYHGDSDNLKYGRVLALNDLEIKSDGFYWLDSGSFISIIHVKDAKVNYELGRIEC</sequence>
<gene>
    <name evidence="1" type="primary">truB</name>
    <name type="ordered locus">Suden_0438</name>
</gene>
<accession>Q30TG2</accession>
<comment type="function">
    <text evidence="1">Responsible for synthesis of pseudouridine from uracil-55 in the psi GC loop of transfer RNAs.</text>
</comment>
<comment type="catalytic activity">
    <reaction evidence="1">
        <text>uridine(55) in tRNA = pseudouridine(55) in tRNA</text>
        <dbReference type="Rhea" id="RHEA:42532"/>
        <dbReference type="Rhea" id="RHEA-COMP:10101"/>
        <dbReference type="Rhea" id="RHEA-COMP:10102"/>
        <dbReference type="ChEBI" id="CHEBI:65314"/>
        <dbReference type="ChEBI" id="CHEBI:65315"/>
        <dbReference type="EC" id="5.4.99.25"/>
    </reaction>
</comment>
<comment type="similarity">
    <text evidence="1">Belongs to the pseudouridine synthase TruB family. Type 1 subfamily.</text>
</comment>
<evidence type="ECO:0000255" key="1">
    <source>
        <dbReference type="HAMAP-Rule" id="MF_01080"/>
    </source>
</evidence>
<name>TRUB_SULDN</name>
<keyword id="KW-0413">Isomerase</keyword>
<keyword id="KW-1185">Reference proteome</keyword>
<keyword id="KW-0819">tRNA processing</keyword>
<organism>
    <name type="scientific">Sulfurimonas denitrificans (strain ATCC 33889 / DSM 1251)</name>
    <name type="common">Thiomicrospira denitrificans (strain ATCC 33889 / DSM 1251)</name>
    <dbReference type="NCBI Taxonomy" id="326298"/>
    <lineage>
        <taxon>Bacteria</taxon>
        <taxon>Pseudomonadati</taxon>
        <taxon>Campylobacterota</taxon>
        <taxon>Epsilonproteobacteria</taxon>
        <taxon>Campylobacterales</taxon>
        <taxon>Sulfurimonadaceae</taxon>
        <taxon>Sulfurimonas</taxon>
    </lineage>
</organism>
<proteinExistence type="inferred from homology"/>
<protein>
    <recommendedName>
        <fullName evidence="1">tRNA pseudouridine synthase B</fullName>
        <ecNumber evidence="1">5.4.99.25</ecNumber>
    </recommendedName>
    <alternativeName>
        <fullName evidence="1">tRNA pseudouridine(55) synthase</fullName>
        <shortName evidence="1">Psi55 synthase</shortName>
    </alternativeName>
    <alternativeName>
        <fullName evidence="1">tRNA pseudouridylate synthase</fullName>
    </alternativeName>
    <alternativeName>
        <fullName evidence="1">tRNA-uridine isomerase</fullName>
    </alternativeName>
</protein>